<accession>A7N0G2</accession>
<evidence type="ECO:0000255" key="1">
    <source>
        <dbReference type="HAMAP-Rule" id="MF_01454"/>
    </source>
</evidence>
<evidence type="ECO:0000255" key="2">
    <source>
        <dbReference type="PROSITE-ProRule" id="PRU01231"/>
    </source>
</evidence>
<evidence type="ECO:0000256" key="3">
    <source>
        <dbReference type="SAM" id="MobiDB-lite"/>
    </source>
</evidence>
<organism>
    <name type="scientific">Vibrio campbellii (strain ATCC BAA-1116)</name>
    <dbReference type="NCBI Taxonomy" id="2902295"/>
    <lineage>
        <taxon>Bacteria</taxon>
        <taxon>Pseudomonadati</taxon>
        <taxon>Pseudomonadota</taxon>
        <taxon>Gammaproteobacteria</taxon>
        <taxon>Vibrionales</taxon>
        <taxon>Vibrionaceae</taxon>
        <taxon>Vibrio</taxon>
    </lineage>
</organism>
<gene>
    <name evidence="1" type="primary">obg</name>
    <name type="ordered locus">VIBHAR_00802</name>
</gene>
<reference key="1">
    <citation type="submission" date="2007-08" db="EMBL/GenBank/DDBJ databases">
        <authorList>
            <consortium name="The Vibrio harveyi Genome Sequencing Project"/>
            <person name="Bassler B."/>
            <person name="Clifton S.W."/>
            <person name="Fulton L."/>
            <person name="Delehaunty K."/>
            <person name="Fronick C."/>
            <person name="Harrison M."/>
            <person name="Markivic C."/>
            <person name="Fulton R."/>
            <person name="Tin-Wollam A.-M."/>
            <person name="Shah N."/>
            <person name="Pepin K."/>
            <person name="Nash W."/>
            <person name="Thiruvilangam P."/>
            <person name="Bhonagiri V."/>
            <person name="Waters C."/>
            <person name="Tu K.C."/>
            <person name="Irgon J."/>
            <person name="Wilson R.K."/>
        </authorList>
    </citation>
    <scope>NUCLEOTIDE SEQUENCE [LARGE SCALE GENOMIC DNA]</scope>
    <source>
        <strain>ATCC BAA-1116 / BB120</strain>
    </source>
</reference>
<comment type="function">
    <text evidence="1">An essential GTPase which binds GTP, GDP and possibly (p)ppGpp with moderate affinity, with high nucleotide exchange rates and a fairly low GTP hydrolysis rate. Plays a role in control of the cell cycle, stress response, ribosome biogenesis and in those bacteria that undergo differentiation, in morphogenesis control.</text>
</comment>
<comment type="cofactor">
    <cofactor evidence="1">
        <name>Mg(2+)</name>
        <dbReference type="ChEBI" id="CHEBI:18420"/>
    </cofactor>
</comment>
<comment type="subunit">
    <text evidence="1">Monomer.</text>
</comment>
<comment type="subcellular location">
    <subcellularLocation>
        <location evidence="1">Cytoplasm</location>
    </subcellularLocation>
</comment>
<comment type="similarity">
    <text evidence="1">Belongs to the TRAFAC class OBG-HflX-like GTPase superfamily. OBG GTPase family.</text>
</comment>
<name>OBG_VIBC1</name>
<sequence length="391" mass="43419">MKFVDEAVVKVQAGDGGSGVVSFWREKFITKGGPDGGDGGDGGDVYIQADENLNTLIDYRFQRFYEAERGENGRGGNCTGKRGKDITLRVPVGTRAVDIHTNEIVAEVAEHGKKVMVAKGGWHGLGNTRFKSSVNRAPRQRTLGTKGEIREIRLELLLLADVGMLGLPNAGKSTFIRAVSAAKPKVADYPFTTLIPSLGVVSVVPEKSFVVADIPGLIEGAADGAGLGIRFLKHLERCRVLLHMIDIMPIDQSDPIQNALTIIDELEQYSEKLAGKPRWLVFNKTDLMPEEEANEKIQEILDALGWEDEYFKISAINRNGTKELCYKLADFMENLPREEEEVAEEDKVNFMWDDYHKDAIAGKDVITEEDDDDWDDCDDEDDDGHVVYVRD</sequence>
<feature type="chain" id="PRO_0000386381" description="GTPase Obg">
    <location>
        <begin position="1"/>
        <end position="391"/>
    </location>
</feature>
<feature type="domain" description="Obg" evidence="2">
    <location>
        <begin position="1"/>
        <end position="159"/>
    </location>
</feature>
<feature type="domain" description="OBG-type G" evidence="1">
    <location>
        <begin position="160"/>
        <end position="333"/>
    </location>
</feature>
<feature type="region of interest" description="Disordered" evidence="3">
    <location>
        <begin position="367"/>
        <end position="391"/>
    </location>
</feature>
<feature type="compositionally biased region" description="Acidic residues" evidence="3">
    <location>
        <begin position="367"/>
        <end position="383"/>
    </location>
</feature>
<feature type="binding site" evidence="1">
    <location>
        <begin position="166"/>
        <end position="173"/>
    </location>
    <ligand>
        <name>GTP</name>
        <dbReference type="ChEBI" id="CHEBI:37565"/>
    </ligand>
</feature>
<feature type="binding site" evidence="1">
    <location>
        <position position="173"/>
    </location>
    <ligand>
        <name>Mg(2+)</name>
        <dbReference type="ChEBI" id="CHEBI:18420"/>
    </ligand>
</feature>
<feature type="binding site" evidence="1">
    <location>
        <begin position="191"/>
        <end position="195"/>
    </location>
    <ligand>
        <name>GTP</name>
        <dbReference type="ChEBI" id="CHEBI:37565"/>
    </ligand>
</feature>
<feature type="binding site" evidence="1">
    <location>
        <position position="193"/>
    </location>
    <ligand>
        <name>Mg(2+)</name>
        <dbReference type="ChEBI" id="CHEBI:18420"/>
    </ligand>
</feature>
<feature type="binding site" evidence="1">
    <location>
        <begin position="213"/>
        <end position="216"/>
    </location>
    <ligand>
        <name>GTP</name>
        <dbReference type="ChEBI" id="CHEBI:37565"/>
    </ligand>
</feature>
<feature type="binding site" evidence="1">
    <location>
        <begin position="283"/>
        <end position="286"/>
    </location>
    <ligand>
        <name>GTP</name>
        <dbReference type="ChEBI" id="CHEBI:37565"/>
    </ligand>
</feature>
<feature type="binding site" evidence="1">
    <location>
        <begin position="314"/>
        <end position="316"/>
    </location>
    <ligand>
        <name>GTP</name>
        <dbReference type="ChEBI" id="CHEBI:37565"/>
    </ligand>
</feature>
<dbReference type="EC" id="3.6.5.-" evidence="1"/>
<dbReference type="EMBL" id="CP000789">
    <property type="protein sequence ID" value="ABU69803.1"/>
    <property type="molecule type" value="Genomic_DNA"/>
</dbReference>
<dbReference type="RefSeq" id="WP_012126913.1">
    <property type="nucleotide sequence ID" value="NC_009783.1"/>
</dbReference>
<dbReference type="SMR" id="A7N0G2"/>
<dbReference type="KEGG" id="vha:VIBHAR_00802"/>
<dbReference type="PATRIC" id="fig|338187.25.peg.1813"/>
<dbReference type="Proteomes" id="UP000008152">
    <property type="component" value="Chromosome I"/>
</dbReference>
<dbReference type="GO" id="GO:0005737">
    <property type="term" value="C:cytoplasm"/>
    <property type="evidence" value="ECO:0007669"/>
    <property type="project" value="UniProtKB-SubCell"/>
</dbReference>
<dbReference type="GO" id="GO:0005525">
    <property type="term" value="F:GTP binding"/>
    <property type="evidence" value="ECO:0007669"/>
    <property type="project" value="UniProtKB-UniRule"/>
</dbReference>
<dbReference type="GO" id="GO:0003924">
    <property type="term" value="F:GTPase activity"/>
    <property type="evidence" value="ECO:0007669"/>
    <property type="project" value="UniProtKB-UniRule"/>
</dbReference>
<dbReference type="GO" id="GO:0000287">
    <property type="term" value="F:magnesium ion binding"/>
    <property type="evidence" value="ECO:0007669"/>
    <property type="project" value="InterPro"/>
</dbReference>
<dbReference type="GO" id="GO:0042254">
    <property type="term" value="P:ribosome biogenesis"/>
    <property type="evidence" value="ECO:0007669"/>
    <property type="project" value="UniProtKB-UniRule"/>
</dbReference>
<dbReference type="CDD" id="cd01898">
    <property type="entry name" value="Obg"/>
    <property type="match status" value="1"/>
</dbReference>
<dbReference type="FunFam" id="2.70.210.12:FF:000001">
    <property type="entry name" value="GTPase Obg"/>
    <property type="match status" value="1"/>
</dbReference>
<dbReference type="FunFam" id="3.40.50.300:FF:000185">
    <property type="entry name" value="GTPase Obg"/>
    <property type="match status" value="1"/>
</dbReference>
<dbReference type="Gene3D" id="2.70.210.12">
    <property type="entry name" value="GTP1/OBG domain"/>
    <property type="match status" value="1"/>
</dbReference>
<dbReference type="Gene3D" id="3.40.50.300">
    <property type="entry name" value="P-loop containing nucleotide triphosphate hydrolases"/>
    <property type="match status" value="1"/>
</dbReference>
<dbReference type="HAMAP" id="MF_01454">
    <property type="entry name" value="GTPase_Obg"/>
    <property type="match status" value="1"/>
</dbReference>
<dbReference type="InterPro" id="IPR031167">
    <property type="entry name" value="G_OBG"/>
</dbReference>
<dbReference type="InterPro" id="IPR006073">
    <property type="entry name" value="GTP-bd"/>
</dbReference>
<dbReference type="InterPro" id="IPR014100">
    <property type="entry name" value="GTP-bd_Obg/CgtA"/>
</dbReference>
<dbReference type="InterPro" id="IPR006074">
    <property type="entry name" value="GTP1-OBG_CS"/>
</dbReference>
<dbReference type="InterPro" id="IPR006169">
    <property type="entry name" value="GTP1_OBG_dom"/>
</dbReference>
<dbReference type="InterPro" id="IPR036726">
    <property type="entry name" value="GTP1_OBG_dom_sf"/>
</dbReference>
<dbReference type="InterPro" id="IPR045086">
    <property type="entry name" value="OBG_GTPase"/>
</dbReference>
<dbReference type="InterPro" id="IPR027417">
    <property type="entry name" value="P-loop_NTPase"/>
</dbReference>
<dbReference type="NCBIfam" id="TIGR02729">
    <property type="entry name" value="Obg_CgtA"/>
    <property type="match status" value="1"/>
</dbReference>
<dbReference type="NCBIfam" id="NF008955">
    <property type="entry name" value="PRK12297.1"/>
    <property type="match status" value="1"/>
</dbReference>
<dbReference type="NCBIfam" id="NF008956">
    <property type="entry name" value="PRK12299.1"/>
    <property type="match status" value="1"/>
</dbReference>
<dbReference type="PANTHER" id="PTHR11702">
    <property type="entry name" value="DEVELOPMENTALLY REGULATED GTP-BINDING PROTEIN-RELATED"/>
    <property type="match status" value="1"/>
</dbReference>
<dbReference type="PANTHER" id="PTHR11702:SF31">
    <property type="entry name" value="MITOCHONDRIAL RIBOSOME-ASSOCIATED GTPASE 2"/>
    <property type="match status" value="1"/>
</dbReference>
<dbReference type="Pfam" id="PF01018">
    <property type="entry name" value="GTP1_OBG"/>
    <property type="match status" value="1"/>
</dbReference>
<dbReference type="Pfam" id="PF01926">
    <property type="entry name" value="MMR_HSR1"/>
    <property type="match status" value="1"/>
</dbReference>
<dbReference type="PIRSF" id="PIRSF002401">
    <property type="entry name" value="GTP_bd_Obg/CgtA"/>
    <property type="match status" value="1"/>
</dbReference>
<dbReference type="PRINTS" id="PR00326">
    <property type="entry name" value="GTP1OBG"/>
</dbReference>
<dbReference type="SUPFAM" id="SSF82051">
    <property type="entry name" value="Obg GTP-binding protein N-terminal domain"/>
    <property type="match status" value="1"/>
</dbReference>
<dbReference type="SUPFAM" id="SSF52540">
    <property type="entry name" value="P-loop containing nucleoside triphosphate hydrolases"/>
    <property type="match status" value="1"/>
</dbReference>
<dbReference type="PROSITE" id="PS51710">
    <property type="entry name" value="G_OBG"/>
    <property type="match status" value="1"/>
</dbReference>
<dbReference type="PROSITE" id="PS00905">
    <property type="entry name" value="GTP1_OBG"/>
    <property type="match status" value="1"/>
</dbReference>
<dbReference type="PROSITE" id="PS51883">
    <property type="entry name" value="OBG"/>
    <property type="match status" value="1"/>
</dbReference>
<keyword id="KW-0963">Cytoplasm</keyword>
<keyword id="KW-0342">GTP-binding</keyword>
<keyword id="KW-0378">Hydrolase</keyword>
<keyword id="KW-0460">Magnesium</keyword>
<keyword id="KW-0479">Metal-binding</keyword>
<keyword id="KW-0547">Nucleotide-binding</keyword>
<proteinExistence type="inferred from homology"/>
<protein>
    <recommendedName>
        <fullName evidence="1">GTPase Obg</fullName>
        <ecNumber evidence="1">3.6.5.-</ecNumber>
    </recommendedName>
    <alternativeName>
        <fullName evidence="1">GTP-binding protein Obg</fullName>
    </alternativeName>
</protein>